<name>SPC29_YEAS7</name>
<feature type="chain" id="PRO_0000409191" description="Spindle pole component 29">
    <location>
        <begin position="1"/>
        <end position="253"/>
    </location>
</feature>
<feature type="region of interest" description="Disordered" evidence="3">
    <location>
        <begin position="1"/>
        <end position="20"/>
    </location>
</feature>
<feature type="region of interest" description="Disordered" evidence="3">
    <location>
        <begin position="31"/>
        <end position="123"/>
    </location>
</feature>
<feature type="region of interest" description="Disordered" evidence="3">
    <location>
        <begin position="210"/>
        <end position="232"/>
    </location>
</feature>
<feature type="compositionally biased region" description="Polar residues" evidence="3">
    <location>
        <begin position="1"/>
        <end position="12"/>
    </location>
</feature>
<feature type="compositionally biased region" description="Basic and acidic residues" evidence="3">
    <location>
        <begin position="69"/>
        <end position="91"/>
    </location>
</feature>
<feature type="compositionally biased region" description="Basic and acidic residues" evidence="3">
    <location>
        <begin position="211"/>
        <end position="232"/>
    </location>
</feature>
<feature type="modified residue" description="Phosphothreonine" evidence="2">
    <location>
        <position position="18"/>
    </location>
</feature>
<feature type="modified residue" description="Phosphoserine" evidence="2">
    <location>
        <position position="65"/>
    </location>
</feature>
<feature type="modified residue" description="Phosphothreonine; by MPS1" evidence="2">
    <location>
        <position position="240"/>
    </location>
</feature>
<organism>
    <name type="scientific">Saccharomyces cerevisiae (strain YJM789)</name>
    <name type="common">Baker's yeast</name>
    <dbReference type="NCBI Taxonomy" id="307796"/>
    <lineage>
        <taxon>Eukaryota</taxon>
        <taxon>Fungi</taxon>
        <taxon>Dikarya</taxon>
        <taxon>Ascomycota</taxon>
        <taxon>Saccharomycotina</taxon>
        <taxon>Saccharomycetes</taxon>
        <taxon>Saccharomycetales</taxon>
        <taxon>Saccharomycetaceae</taxon>
        <taxon>Saccharomyces</taxon>
    </lineage>
</organism>
<comment type="function">
    <text evidence="1">Component of the spindle pole body (SPB) required for the proper execution of spindle pole body (SPB) duplication. Links the central plaque component SPC42 to the inner plaque component SPC110 (By similarity).</text>
</comment>
<comment type="subunit">
    <text evidence="1">Component of the SPC110 complex containing at least CMD1, SPC29, SPC42 and SCP110. Interacts with BBP1.</text>
</comment>
<comment type="subcellular location">
    <subcellularLocation>
        <location evidence="1">Nucleus</location>
    </subcellularLocation>
    <subcellularLocation>
        <location evidence="1">Cytoplasm</location>
        <location evidence="1">Cytoskeleton</location>
        <location evidence="1">Microtubule organizing center</location>
        <location evidence="1">Spindle pole body</location>
    </subcellularLocation>
</comment>
<comment type="PTM">
    <text evidence="1">MPS1-mediated phosphorylation at Thr-240 is required for spindle pole body duplication.</text>
</comment>
<comment type="similarity">
    <text evidence="4">Belongs to the SPC29 family.</text>
</comment>
<proteinExistence type="inferred from homology"/>
<evidence type="ECO:0000250" key="1"/>
<evidence type="ECO:0000250" key="2">
    <source>
        <dbReference type="UniProtKB" id="P33419"/>
    </source>
</evidence>
<evidence type="ECO:0000256" key="3">
    <source>
        <dbReference type="SAM" id="MobiDB-lite"/>
    </source>
</evidence>
<evidence type="ECO:0000305" key="4"/>
<dbReference type="EMBL" id="AAFW02000135">
    <property type="protein sequence ID" value="EDN61020.1"/>
    <property type="molecule type" value="Genomic_DNA"/>
</dbReference>
<dbReference type="SMR" id="A6ZWC8"/>
<dbReference type="HOGENOM" id="CLU_1099229_0_0_1"/>
<dbReference type="Proteomes" id="UP000007060">
    <property type="component" value="Unassembled WGS sequence"/>
</dbReference>
<dbReference type="GO" id="GO:0005823">
    <property type="term" value="C:central plaque of spindle pole body"/>
    <property type="evidence" value="ECO:0007669"/>
    <property type="project" value="InterPro"/>
</dbReference>
<dbReference type="GO" id="GO:0005737">
    <property type="term" value="C:cytoplasm"/>
    <property type="evidence" value="ECO:0007669"/>
    <property type="project" value="UniProtKB-KW"/>
</dbReference>
<dbReference type="GO" id="GO:0005634">
    <property type="term" value="C:nucleus"/>
    <property type="evidence" value="ECO:0007669"/>
    <property type="project" value="UniProtKB-SubCell"/>
</dbReference>
<dbReference type="GO" id="GO:0005200">
    <property type="term" value="F:structural constituent of cytoskeleton"/>
    <property type="evidence" value="ECO:0007669"/>
    <property type="project" value="InterPro"/>
</dbReference>
<dbReference type="GO" id="GO:0030474">
    <property type="term" value="P:spindle pole body duplication"/>
    <property type="evidence" value="ECO:0007669"/>
    <property type="project" value="InterPro"/>
</dbReference>
<dbReference type="InterPro" id="IPR031392">
    <property type="entry name" value="Spc29"/>
</dbReference>
<dbReference type="Pfam" id="PF17082">
    <property type="entry name" value="Spc29"/>
    <property type="match status" value="1"/>
</dbReference>
<gene>
    <name type="primary">SPC29</name>
    <name type="synonym">LPH3</name>
    <name type="synonym">NIP29</name>
    <name type="ORF">SCY_5605</name>
</gene>
<accession>A6ZWC8</accession>
<keyword id="KW-0963">Cytoplasm</keyword>
<keyword id="KW-0206">Cytoskeleton</keyword>
<keyword id="KW-0539">Nucleus</keyword>
<keyword id="KW-0597">Phosphoprotein</keyword>
<sequence length="253" mass="29277">MDYNNFGNSASKKFQDDTLNRVRKEHEEALKKLREENFSSNTSELGNKKHYRAQERMSSPLHRLSPAGKSDDRKVKSPLDDKLRRQLREGNTRLPPPPFSSYGMPPTNRSNLDRIRRRTSSPVRTDKFASQNVIDDQRLEIKYLERIVYDQGTVIDNLTSRITRLESFILNSISDRGDKNFASLEHSRSFSGFPTNKTYGLQMGGLYENDMPYRRSSDNINKEGAREDRSSQIHIENESTEDILKILSSSFHN</sequence>
<protein>
    <recommendedName>
        <fullName>Spindle pole component 29</fullName>
    </recommendedName>
</protein>
<reference key="1">
    <citation type="journal article" date="2007" name="Proc. Natl. Acad. Sci. U.S.A.">
        <title>Genome sequencing and comparative analysis of Saccharomyces cerevisiae strain YJM789.</title>
        <authorList>
            <person name="Wei W."/>
            <person name="McCusker J.H."/>
            <person name="Hyman R.W."/>
            <person name="Jones T."/>
            <person name="Ning Y."/>
            <person name="Cao Z."/>
            <person name="Gu Z."/>
            <person name="Bruno D."/>
            <person name="Miranda M."/>
            <person name="Nguyen M."/>
            <person name="Wilhelmy J."/>
            <person name="Komp C."/>
            <person name="Tamse R."/>
            <person name="Wang X."/>
            <person name="Jia P."/>
            <person name="Luedi P."/>
            <person name="Oefner P.J."/>
            <person name="David L."/>
            <person name="Dietrich F.S."/>
            <person name="Li Y."/>
            <person name="Davis R.W."/>
            <person name="Steinmetz L.M."/>
        </authorList>
    </citation>
    <scope>NUCLEOTIDE SEQUENCE [LARGE SCALE GENOMIC DNA]</scope>
    <source>
        <strain>YJM789</strain>
    </source>
</reference>